<evidence type="ECO:0000255" key="1">
    <source>
        <dbReference type="HAMAP-Rule" id="MF_01080"/>
    </source>
</evidence>
<sequence length="329" mass="36368">MNENLNGILNVYKEAGWTSFDVVAKLRGILKTKKIGHGGTLDPSVTGVLPVAVGKSTRLLEYMEAAGKIYEGEVTIGFSTETEDADGEIVSKTPVERELTESEIDSVMKNFIGKIKQIPPMYSAVKINGKKLYEYARAGQTVDRPTREITIKSFVRTSPMMTDEAAGLVSFSFKVECSKGTYVRTLAVDLAEQLGYAGHMSKLQRTASNGLMIKDAVKLSEIEVAMEAGELSSLMYPAEYAVSDLPRVNLTADQFEMARVGKKFAEDDWVTDETTDSPVIKSNKSKFLLTDLSELTRDKFAAFYDDKLIAVYMKHPEKAGIWKPNKVLV</sequence>
<comment type="function">
    <text evidence="1">Responsible for synthesis of pseudouridine from uracil-55 in the psi GC loop of transfer RNAs.</text>
</comment>
<comment type="catalytic activity">
    <reaction evidence="1">
        <text>uridine(55) in tRNA = pseudouridine(55) in tRNA</text>
        <dbReference type="Rhea" id="RHEA:42532"/>
        <dbReference type="Rhea" id="RHEA-COMP:10101"/>
        <dbReference type="Rhea" id="RHEA-COMP:10102"/>
        <dbReference type="ChEBI" id="CHEBI:65314"/>
        <dbReference type="ChEBI" id="CHEBI:65315"/>
        <dbReference type="EC" id="5.4.99.25"/>
    </reaction>
</comment>
<comment type="similarity">
    <text evidence="1">Belongs to the pseudouridine synthase TruB family. Type 1 subfamily.</text>
</comment>
<protein>
    <recommendedName>
        <fullName evidence="1">tRNA pseudouridine synthase B</fullName>
        <ecNumber evidence="1">5.4.99.25</ecNumber>
    </recommendedName>
    <alternativeName>
        <fullName evidence="1">tRNA pseudouridine(55) synthase</fullName>
        <shortName evidence="1">Psi55 synthase</shortName>
    </alternativeName>
    <alternativeName>
        <fullName evidence="1">tRNA pseudouridylate synthase</fullName>
    </alternativeName>
    <alternativeName>
        <fullName evidence="1">tRNA-uridine isomerase</fullName>
    </alternativeName>
</protein>
<feature type="chain" id="PRO_0000121849" description="tRNA pseudouridine synthase B">
    <location>
        <begin position="1"/>
        <end position="329"/>
    </location>
</feature>
<feature type="active site" description="Nucleophile" evidence="1">
    <location>
        <position position="42"/>
    </location>
</feature>
<accession>Q9CGH0</accession>
<keyword id="KW-0413">Isomerase</keyword>
<keyword id="KW-1185">Reference proteome</keyword>
<keyword id="KW-0819">tRNA processing</keyword>
<organism>
    <name type="scientific">Lactococcus lactis subsp. lactis (strain IL1403)</name>
    <name type="common">Streptococcus lactis</name>
    <dbReference type="NCBI Taxonomy" id="272623"/>
    <lineage>
        <taxon>Bacteria</taxon>
        <taxon>Bacillati</taxon>
        <taxon>Bacillota</taxon>
        <taxon>Bacilli</taxon>
        <taxon>Lactobacillales</taxon>
        <taxon>Streptococcaceae</taxon>
        <taxon>Lactococcus</taxon>
    </lineage>
</organism>
<name>TRUB_LACLA</name>
<dbReference type="EC" id="5.4.99.25" evidence="1"/>
<dbReference type="EMBL" id="AE005176">
    <property type="protein sequence ID" value="AAK05224.1"/>
    <property type="molecule type" value="Genomic_DNA"/>
</dbReference>
<dbReference type="PIR" id="F86765">
    <property type="entry name" value="F86765"/>
</dbReference>
<dbReference type="RefSeq" id="NP_267282.1">
    <property type="nucleotide sequence ID" value="NC_002662.1"/>
</dbReference>
<dbReference type="RefSeq" id="WP_010905772.1">
    <property type="nucleotide sequence ID" value="NC_002662.1"/>
</dbReference>
<dbReference type="SMR" id="Q9CGH0"/>
<dbReference type="PaxDb" id="272623-L0328"/>
<dbReference type="EnsemblBacteria" id="AAK05224">
    <property type="protein sequence ID" value="AAK05224"/>
    <property type="gene ID" value="L0328"/>
</dbReference>
<dbReference type="KEGG" id="lla:L0328"/>
<dbReference type="PATRIC" id="fig|272623.7.peg.1204"/>
<dbReference type="eggNOG" id="COG0130">
    <property type="taxonomic scope" value="Bacteria"/>
</dbReference>
<dbReference type="HOGENOM" id="CLU_032087_0_1_9"/>
<dbReference type="OrthoDB" id="9802309at2"/>
<dbReference type="Proteomes" id="UP000002196">
    <property type="component" value="Chromosome"/>
</dbReference>
<dbReference type="GO" id="GO:0003723">
    <property type="term" value="F:RNA binding"/>
    <property type="evidence" value="ECO:0007669"/>
    <property type="project" value="InterPro"/>
</dbReference>
<dbReference type="GO" id="GO:0160148">
    <property type="term" value="F:tRNA pseudouridine(55) synthase activity"/>
    <property type="evidence" value="ECO:0007669"/>
    <property type="project" value="UniProtKB-EC"/>
</dbReference>
<dbReference type="GO" id="GO:1990481">
    <property type="term" value="P:mRNA pseudouridine synthesis"/>
    <property type="evidence" value="ECO:0007669"/>
    <property type="project" value="TreeGrafter"/>
</dbReference>
<dbReference type="GO" id="GO:0031119">
    <property type="term" value="P:tRNA pseudouridine synthesis"/>
    <property type="evidence" value="ECO:0007669"/>
    <property type="project" value="UniProtKB-UniRule"/>
</dbReference>
<dbReference type="CDD" id="cd02573">
    <property type="entry name" value="PseudoU_synth_EcTruB"/>
    <property type="match status" value="1"/>
</dbReference>
<dbReference type="FunFam" id="3.30.2350.10:FF:000011">
    <property type="entry name" value="tRNA pseudouridine synthase B"/>
    <property type="match status" value="1"/>
</dbReference>
<dbReference type="Gene3D" id="3.30.2350.10">
    <property type="entry name" value="Pseudouridine synthase"/>
    <property type="match status" value="1"/>
</dbReference>
<dbReference type="HAMAP" id="MF_01080">
    <property type="entry name" value="TruB_bact"/>
    <property type="match status" value="1"/>
</dbReference>
<dbReference type="InterPro" id="IPR020103">
    <property type="entry name" value="PsdUridine_synth_cat_dom_sf"/>
</dbReference>
<dbReference type="InterPro" id="IPR002501">
    <property type="entry name" value="PsdUridine_synth_N"/>
</dbReference>
<dbReference type="InterPro" id="IPR014780">
    <property type="entry name" value="tRNA_psdUridine_synth_TruB"/>
</dbReference>
<dbReference type="InterPro" id="IPR032819">
    <property type="entry name" value="TruB_C"/>
</dbReference>
<dbReference type="NCBIfam" id="TIGR00431">
    <property type="entry name" value="TruB"/>
    <property type="match status" value="1"/>
</dbReference>
<dbReference type="PANTHER" id="PTHR13767:SF2">
    <property type="entry name" value="PSEUDOURIDYLATE SYNTHASE TRUB1"/>
    <property type="match status" value="1"/>
</dbReference>
<dbReference type="PANTHER" id="PTHR13767">
    <property type="entry name" value="TRNA-PSEUDOURIDINE SYNTHASE"/>
    <property type="match status" value="1"/>
</dbReference>
<dbReference type="Pfam" id="PF16198">
    <property type="entry name" value="TruB_C_2"/>
    <property type="match status" value="1"/>
</dbReference>
<dbReference type="Pfam" id="PF01509">
    <property type="entry name" value="TruB_N"/>
    <property type="match status" value="1"/>
</dbReference>
<dbReference type="SUPFAM" id="SSF55120">
    <property type="entry name" value="Pseudouridine synthase"/>
    <property type="match status" value="1"/>
</dbReference>
<proteinExistence type="inferred from homology"/>
<gene>
    <name evidence="1" type="primary">truB</name>
    <name type="ordered locus">LL1126</name>
    <name type="ORF">L0328</name>
</gene>
<reference key="1">
    <citation type="journal article" date="2001" name="Genome Res.">
        <title>The complete genome sequence of the lactic acid bacterium Lactococcus lactis ssp. lactis IL1403.</title>
        <authorList>
            <person name="Bolotin A."/>
            <person name="Wincker P."/>
            <person name="Mauger S."/>
            <person name="Jaillon O."/>
            <person name="Malarme K."/>
            <person name="Weissenbach J."/>
            <person name="Ehrlich S.D."/>
            <person name="Sorokin A."/>
        </authorList>
    </citation>
    <scope>NUCLEOTIDE SEQUENCE [LARGE SCALE GENOMIC DNA]</scope>
    <source>
        <strain>IL1403</strain>
    </source>
</reference>